<reference key="1">
    <citation type="submission" date="2004-07" db="EMBL/GenBank/DDBJ databases">
        <authorList>
            <consortium name="NIH - Xenopus Gene Collection (XGC) project"/>
        </authorList>
    </citation>
    <scope>NUCLEOTIDE SEQUENCE [LARGE SCALE MRNA]</scope>
    <source>
        <tissue>Embryo</tissue>
    </source>
</reference>
<dbReference type="EC" id="2.7.11.1"/>
<dbReference type="EMBL" id="BC076740">
    <property type="protein sequence ID" value="AAH76740.1"/>
    <property type="molecule type" value="mRNA"/>
</dbReference>
<dbReference type="RefSeq" id="NP_001086516.1">
    <property type="nucleotide sequence ID" value="NM_001093047.1"/>
</dbReference>
<dbReference type="SMR" id="Q6DFJ6"/>
<dbReference type="BioGRID" id="103211">
    <property type="interactions" value="1"/>
</dbReference>
<dbReference type="IntAct" id="Q6DFJ6">
    <property type="interactions" value="1"/>
</dbReference>
<dbReference type="DNASU" id="446351"/>
<dbReference type="GeneID" id="446351"/>
<dbReference type="KEGG" id="xla:446351"/>
<dbReference type="AGR" id="Xenbase:XB-GENE-955455"/>
<dbReference type="CTD" id="446351"/>
<dbReference type="Xenbase" id="XB-GENE-955455">
    <property type="gene designation" value="tbk1.L"/>
</dbReference>
<dbReference type="OMA" id="WSADMPV"/>
<dbReference type="OrthoDB" id="10013850at2759"/>
<dbReference type="Proteomes" id="UP000186698">
    <property type="component" value="Chromosome 3L"/>
</dbReference>
<dbReference type="Bgee" id="446351">
    <property type="expression patterns" value="Expressed in spleen and 19 other cell types or tissues"/>
</dbReference>
<dbReference type="GO" id="GO:0005737">
    <property type="term" value="C:cytoplasm"/>
    <property type="evidence" value="ECO:0000318"/>
    <property type="project" value="GO_Central"/>
</dbReference>
<dbReference type="GO" id="GO:0005524">
    <property type="term" value="F:ATP binding"/>
    <property type="evidence" value="ECO:0007669"/>
    <property type="project" value="UniProtKB-KW"/>
</dbReference>
<dbReference type="GO" id="GO:0106310">
    <property type="term" value="F:protein serine kinase activity"/>
    <property type="evidence" value="ECO:0007669"/>
    <property type="project" value="RHEA"/>
</dbReference>
<dbReference type="GO" id="GO:0004674">
    <property type="term" value="F:protein serine/threonine kinase activity"/>
    <property type="evidence" value="ECO:0000250"/>
    <property type="project" value="UniProtKB"/>
</dbReference>
<dbReference type="GO" id="GO:0002218">
    <property type="term" value="P:activation of innate immune response"/>
    <property type="evidence" value="ECO:0000318"/>
    <property type="project" value="GO_Central"/>
</dbReference>
<dbReference type="GO" id="GO:0045087">
    <property type="term" value="P:innate immune response"/>
    <property type="evidence" value="ECO:0000250"/>
    <property type="project" value="UniProtKB"/>
</dbReference>
<dbReference type="GO" id="GO:0018105">
    <property type="term" value="P:peptidyl-serine phosphorylation"/>
    <property type="evidence" value="ECO:0000250"/>
    <property type="project" value="UniProtKB"/>
</dbReference>
<dbReference type="GO" id="GO:0018107">
    <property type="term" value="P:peptidyl-threonine phosphorylation"/>
    <property type="evidence" value="ECO:0000250"/>
    <property type="project" value="UniProtKB"/>
</dbReference>
<dbReference type="GO" id="GO:0032481">
    <property type="term" value="P:positive regulation of type I interferon production"/>
    <property type="evidence" value="ECO:0000318"/>
    <property type="project" value="GO_Central"/>
</dbReference>
<dbReference type="GO" id="GO:0032479">
    <property type="term" value="P:regulation of type I interferon production"/>
    <property type="evidence" value="ECO:0000250"/>
    <property type="project" value="UniProtKB"/>
</dbReference>
<dbReference type="CDD" id="cd13988">
    <property type="entry name" value="STKc_TBK1"/>
    <property type="match status" value="1"/>
</dbReference>
<dbReference type="CDD" id="cd21954">
    <property type="entry name" value="TBK1_C"/>
    <property type="match status" value="1"/>
</dbReference>
<dbReference type="CDD" id="cd17127">
    <property type="entry name" value="Ubl_TBK1"/>
    <property type="match status" value="1"/>
</dbReference>
<dbReference type="FunFam" id="1.10.510.10:FF:000100">
    <property type="entry name" value="inhibitor of nuclear factor kappa-B kinase subunit epsilon"/>
    <property type="match status" value="1"/>
</dbReference>
<dbReference type="FunFam" id="1.20.1270.420:FF:000001">
    <property type="entry name" value="Serine/threonine-protein kinase TBK1"/>
    <property type="match status" value="1"/>
</dbReference>
<dbReference type="FunFam" id="3.30.200.20:FF:000106">
    <property type="entry name" value="serine/threonine-protein kinase TBK1 isoform X1"/>
    <property type="match status" value="1"/>
</dbReference>
<dbReference type="FunFam" id="3.10.20.90:FF:000112">
    <property type="entry name" value="TANK binding kinase TBK1"/>
    <property type="match status" value="1"/>
</dbReference>
<dbReference type="Gene3D" id="1.20.1270.420">
    <property type="match status" value="1"/>
</dbReference>
<dbReference type="Gene3D" id="3.10.20.90">
    <property type="entry name" value="Phosphatidylinositol 3-kinase Catalytic Subunit, Chain A, domain 1"/>
    <property type="match status" value="1"/>
</dbReference>
<dbReference type="Gene3D" id="3.30.200.20">
    <property type="entry name" value="Phosphorylase Kinase, domain 1"/>
    <property type="match status" value="1"/>
</dbReference>
<dbReference type="Gene3D" id="1.10.510.10">
    <property type="entry name" value="Transferase(Phosphotransferase) domain 1"/>
    <property type="match status" value="1"/>
</dbReference>
<dbReference type="InterPro" id="IPR051180">
    <property type="entry name" value="IKK"/>
</dbReference>
<dbReference type="InterPro" id="IPR011009">
    <property type="entry name" value="Kinase-like_dom_sf"/>
</dbReference>
<dbReference type="InterPro" id="IPR000719">
    <property type="entry name" value="Prot_kinase_dom"/>
</dbReference>
<dbReference type="InterPro" id="IPR017441">
    <property type="entry name" value="Protein_kinase_ATP_BS"/>
</dbReference>
<dbReference type="InterPro" id="IPR041309">
    <property type="entry name" value="TBK1_CCD1"/>
</dbReference>
<dbReference type="InterPro" id="IPR041087">
    <property type="entry name" value="TBK1_ULD"/>
</dbReference>
<dbReference type="PANTHER" id="PTHR22969">
    <property type="entry name" value="IKB KINASE"/>
    <property type="match status" value="1"/>
</dbReference>
<dbReference type="PANTHER" id="PTHR22969:SF14">
    <property type="entry name" value="SERINE_THREONINE-PROTEIN KINASE TBK1"/>
    <property type="match status" value="1"/>
</dbReference>
<dbReference type="Pfam" id="PF00069">
    <property type="entry name" value="Pkinase"/>
    <property type="match status" value="1"/>
</dbReference>
<dbReference type="Pfam" id="PF18394">
    <property type="entry name" value="TBK1_CCD1"/>
    <property type="match status" value="1"/>
</dbReference>
<dbReference type="Pfam" id="PF18396">
    <property type="entry name" value="TBK1_ULD"/>
    <property type="match status" value="1"/>
</dbReference>
<dbReference type="SMART" id="SM00220">
    <property type="entry name" value="S_TKc"/>
    <property type="match status" value="1"/>
</dbReference>
<dbReference type="SUPFAM" id="SSF56112">
    <property type="entry name" value="Protein kinase-like (PK-like)"/>
    <property type="match status" value="1"/>
</dbReference>
<dbReference type="PROSITE" id="PS00107">
    <property type="entry name" value="PROTEIN_KINASE_ATP"/>
    <property type="match status" value="1"/>
</dbReference>
<dbReference type="PROSITE" id="PS50011">
    <property type="entry name" value="PROTEIN_KINASE_DOM"/>
    <property type="match status" value="1"/>
</dbReference>
<proteinExistence type="evidence at transcript level"/>
<accession>Q6DFJ6</accession>
<feature type="chain" id="PRO_0000086745" description="Serine/threonine-protein kinase TBK1">
    <location>
        <begin position="1"/>
        <end position="725"/>
    </location>
</feature>
<feature type="domain" description="Protein kinase" evidence="3">
    <location>
        <begin position="9"/>
        <end position="306"/>
    </location>
</feature>
<feature type="domain" description="Ubiquitin-like">
    <location>
        <begin position="309"/>
        <end position="385"/>
    </location>
</feature>
<feature type="coiled-coil region" evidence="2">
    <location>
        <begin position="635"/>
        <end position="709"/>
    </location>
</feature>
<feature type="active site" description="Proton acceptor" evidence="3">
    <location>
        <position position="135"/>
    </location>
</feature>
<feature type="binding site" evidence="3">
    <location>
        <begin position="15"/>
        <end position="23"/>
    </location>
    <ligand>
        <name>ATP</name>
        <dbReference type="ChEBI" id="CHEBI:30616"/>
    </ligand>
</feature>
<feature type="binding site" evidence="3">
    <location>
        <position position="38"/>
    </location>
    <ligand>
        <name>ATP</name>
        <dbReference type="ChEBI" id="CHEBI:30616"/>
    </ligand>
</feature>
<organism>
    <name type="scientific">Xenopus laevis</name>
    <name type="common">African clawed frog</name>
    <dbReference type="NCBI Taxonomy" id="8355"/>
    <lineage>
        <taxon>Eukaryota</taxon>
        <taxon>Metazoa</taxon>
        <taxon>Chordata</taxon>
        <taxon>Craniata</taxon>
        <taxon>Vertebrata</taxon>
        <taxon>Euteleostomi</taxon>
        <taxon>Amphibia</taxon>
        <taxon>Batrachia</taxon>
        <taxon>Anura</taxon>
        <taxon>Pipoidea</taxon>
        <taxon>Pipidae</taxon>
        <taxon>Xenopodinae</taxon>
        <taxon>Xenopus</taxon>
        <taxon>Xenopus</taxon>
    </lineage>
</organism>
<keyword id="KW-0067">ATP-binding</keyword>
<keyword id="KW-0175">Coiled coil</keyword>
<keyword id="KW-0963">Cytoplasm</keyword>
<keyword id="KW-0391">Immunity</keyword>
<keyword id="KW-0399">Innate immunity</keyword>
<keyword id="KW-0418">Kinase</keyword>
<keyword id="KW-0547">Nucleotide-binding</keyword>
<keyword id="KW-1185">Reference proteome</keyword>
<keyword id="KW-0723">Serine/threonine-protein kinase</keyword>
<keyword id="KW-0808">Transferase</keyword>
<protein>
    <recommendedName>
        <fullName>Serine/threonine-protein kinase TBK1</fullName>
        <ecNumber>2.7.11.1</ecNumber>
    </recommendedName>
</protein>
<comment type="function">
    <text evidence="1">Serine/threonine kinase that plays an essential role in regulating inflammatory responses to foreign agents. Following activation of toll-like receptors by viral or bacterial components, associates with traf3 and tank and phosphorylates interferon regulatory factors (IRFs) irf3 and irf7 as well as ddx3x. This activity allows subsequent homodimerization and nuclear translocation of the IRFs leading to transcriptional activation of pro-inflammatory and antiviral genes including ifna and ifnb. In order to establish such an antiviral state, TBK1 form several different complexes whose composition depends on the type of cell and cellular stimuli.</text>
</comment>
<comment type="catalytic activity">
    <reaction evidence="1">
        <text>L-seryl-[protein] + ATP = O-phospho-L-seryl-[protein] + ADP + H(+)</text>
        <dbReference type="Rhea" id="RHEA:17989"/>
        <dbReference type="Rhea" id="RHEA-COMP:9863"/>
        <dbReference type="Rhea" id="RHEA-COMP:11604"/>
        <dbReference type="ChEBI" id="CHEBI:15378"/>
        <dbReference type="ChEBI" id="CHEBI:29999"/>
        <dbReference type="ChEBI" id="CHEBI:30616"/>
        <dbReference type="ChEBI" id="CHEBI:83421"/>
        <dbReference type="ChEBI" id="CHEBI:456216"/>
        <dbReference type="EC" id="2.7.11.1"/>
    </reaction>
</comment>
<comment type="catalytic activity">
    <reaction evidence="1">
        <text>L-threonyl-[protein] + ATP = O-phospho-L-threonyl-[protein] + ADP + H(+)</text>
        <dbReference type="Rhea" id="RHEA:46608"/>
        <dbReference type="Rhea" id="RHEA-COMP:11060"/>
        <dbReference type="Rhea" id="RHEA-COMP:11605"/>
        <dbReference type="ChEBI" id="CHEBI:15378"/>
        <dbReference type="ChEBI" id="CHEBI:30013"/>
        <dbReference type="ChEBI" id="CHEBI:30616"/>
        <dbReference type="ChEBI" id="CHEBI:61977"/>
        <dbReference type="ChEBI" id="CHEBI:456216"/>
        <dbReference type="EC" id="2.7.11.1"/>
    </reaction>
</comment>
<comment type="subunit">
    <text evidence="1">Homodimer.</text>
</comment>
<comment type="subcellular location">
    <subcellularLocation>
        <location evidence="1">Cytoplasm</location>
    </subcellularLocation>
</comment>
<comment type="domain">
    <text evidence="1">Comprises A N-terminal kinase domain, a ubiquitin-like domain and a C-terminal coiled-coil region mediating homodimerization.</text>
</comment>
<comment type="similarity">
    <text evidence="3">Belongs to the protein kinase superfamily. Ser/Thr protein kinase family. I-kappa-B kinase subfamily.</text>
</comment>
<sequence>MQSTANYLWMLSDILGQGATANVYRGRNKKTGDLYAVKVFNSLSFQRPADVQMREFEVLKKLNHKNIVKLFAIEEEMSSRHKVLVMEFCPCASLYSVLEEPTNSYGLPESEFLIVSRDVVAGMNHLRENGIIHRDIKPGNIMREIGEDGKSVYKLTDFGAARELEDDEQFVSLYGTEEYLHPDMYERAVLRKEHQKKYSATVDLWSIGVTFYHAATGSLPFRPFEGPRRNKEVMYKIIAGKPSGAISGVQRAENGPIEWSGELPATCNLSMGLQTLFTPVLANILEADQEKCWGFEQFFAVTNDIFNRIVVHVFSLQQMTPHKIYINTYDKVPDFHDLVYKQTKIPGQNQELLFEGRRLVLEQGRLAQHFPITTDENPIFVLTREMVSVIGLRFDEIVIPKPISHYDLDVDANMAKAVTGVACYYCRIAASLLLVLDLMRKGIRWLSELMKEEYNENVHRNTEVSLKLNFCNRTTEKDLKIYEQLMQTSVESEVYAIHAKLLNLSSTQEGLKSSLQEVKNKLTPGGTLMDSWINTEGIHAADRNVEKLQVLLSLITEIYCQFKKDKAQRRLSYNEEQIHKFDKQKLCLHAAKAYSLFKDECVGKYEVFRSKTLEWMRKMIHVRKQLFSIKSKCFDIEEEASKCQHYINQYQEKMSPKMFAAPSGMKSAVNPIYSSPNTLVEMTLGMRKLKEDMEGVVKELEENNHILERFGALTIDGDFRNVDCI</sequence>
<gene>
    <name type="primary">tbk1</name>
</gene>
<name>TBK1_XENLA</name>
<evidence type="ECO:0000250" key="1">
    <source>
        <dbReference type="UniProtKB" id="Q9UHD2"/>
    </source>
</evidence>
<evidence type="ECO:0000255" key="2"/>
<evidence type="ECO:0000255" key="3">
    <source>
        <dbReference type="PROSITE-ProRule" id="PRU00159"/>
    </source>
</evidence>